<dbReference type="EC" id="2.5.1.141" evidence="1"/>
<dbReference type="EMBL" id="CP000097">
    <property type="protein sequence ID" value="ABB26709.1"/>
    <property type="molecule type" value="Genomic_DNA"/>
</dbReference>
<dbReference type="RefSeq" id="WP_011360516.1">
    <property type="nucleotide sequence ID" value="NC_007513.1"/>
</dbReference>
<dbReference type="SMR" id="Q3AV04"/>
<dbReference type="STRING" id="316279.Syncc9902_1752"/>
<dbReference type="KEGG" id="sye:Syncc9902_1752"/>
<dbReference type="eggNOG" id="COG0109">
    <property type="taxonomic scope" value="Bacteria"/>
</dbReference>
<dbReference type="HOGENOM" id="CLU_029631_0_2_3"/>
<dbReference type="OrthoDB" id="9814417at2"/>
<dbReference type="UniPathway" id="UPA00834">
    <property type="reaction ID" value="UER00712"/>
</dbReference>
<dbReference type="Proteomes" id="UP000002712">
    <property type="component" value="Chromosome"/>
</dbReference>
<dbReference type="GO" id="GO:0005886">
    <property type="term" value="C:plasma membrane"/>
    <property type="evidence" value="ECO:0007669"/>
    <property type="project" value="UniProtKB-SubCell"/>
</dbReference>
<dbReference type="GO" id="GO:0008495">
    <property type="term" value="F:protoheme IX farnesyltransferase activity"/>
    <property type="evidence" value="ECO:0007669"/>
    <property type="project" value="UniProtKB-UniRule"/>
</dbReference>
<dbReference type="GO" id="GO:0048034">
    <property type="term" value="P:heme O biosynthetic process"/>
    <property type="evidence" value="ECO:0007669"/>
    <property type="project" value="UniProtKB-UniRule"/>
</dbReference>
<dbReference type="CDD" id="cd13957">
    <property type="entry name" value="PT_UbiA_Cox10"/>
    <property type="match status" value="1"/>
</dbReference>
<dbReference type="Gene3D" id="1.10.357.140">
    <property type="entry name" value="UbiA prenyltransferase"/>
    <property type="match status" value="1"/>
</dbReference>
<dbReference type="HAMAP" id="MF_00154">
    <property type="entry name" value="CyoE_CtaB"/>
    <property type="match status" value="1"/>
</dbReference>
<dbReference type="InterPro" id="IPR006369">
    <property type="entry name" value="Protohaem_IX_farnesylTrfase"/>
</dbReference>
<dbReference type="InterPro" id="IPR000537">
    <property type="entry name" value="UbiA_prenyltransferase"/>
</dbReference>
<dbReference type="InterPro" id="IPR030470">
    <property type="entry name" value="UbiA_prenylTrfase_CS"/>
</dbReference>
<dbReference type="InterPro" id="IPR044878">
    <property type="entry name" value="UbiA_sf"/>
</dbReference>
<dbReference type="NCBIfam" id="TIGR01473">
    <property type="entry name" value="cyoE_ctaB"/>
    <property type="match status" value="1"/>
</dbReference>
<dbReference type="NCBIfam" id="NF003349">
    <property type="entry name" value="PRK04375.1-2"/>
    <property type="match status" value="1"/>
</dbReference>
<dbReference type="PANTHER" id="PTHR43448:SF7">
    <property type="entry name" value="4-HYDROXYBENZOATE SOLANESYLTRANSFERASE"/>
    <property type="match status" value="1"/>
</dbReference>
<dbReference type="PANTHER" id="PTHR43448">
    <property type="entry name" value="PROTOHEME IX FARNESYLTRANSFERASE, MITOCHONDRIAL"/>
    <property type="match status" value="1"/>
</dbReference>
<dbReference type="Pfam" id="PF01040">
    <property type="entry name" value="UbiA"/>
    <property type="match status" value="1"/>
</dbReference>
<dbReference type="PROSITE" id="PS00943">
    <property type="entry name" value="UBIA"/>
    <property type="match status" value="1"/>
</dbReference>
<keyword id="KW-0997">Cell inner membrane</keyword>
<keyword id="KW-1003">Cell membrane</keyword>
<keyword id="KW-0350">Heme biosynthesis</keyword>
<keyword id="KW-0472">Membrane</keyword>
<keyword id="KW-1185">Reference proteome</keyword>
<keyword id="KW-0808">Transferase</keyword>
<keyword id="KW-0812">Transmembrane</keyword>
<keyword id="KW-1133">Transmembrane helix</keyword>
<reference key="1">
    <citation type="submission" date="2005-08" db="EMBL/GenBank/DDBJ databases">
        <title>Complete sequence of Synechococcus sp. CC9902.</title>
        <authorList>
            <person name="Copeland A."/>
            <person name="Lucas S."/>
            <person name="Lapidus A."/>
            <person name="Barry K."/>
            <person name="Detter J.C."/>
            <person name="Glavina T."/>
            <person name="Hammon N."/>
            <person name="Israni S."/>
            <person name="Pitluck S."/>
            <person name="Martinez M."/>
            <person name="Schmutz J."/>
            <person name="Larimer F."/>
            <person name="Land M."/>
            <person name="Kyrpides N."/>
            <person name="Ivanova N."/>
            <person name="Richardson P."/>
        </authorList>
    </citation>
    <scope>NUCLEOTIDE SEQUENCE [LARGE SCALE GENOMIC DNA]</scope>
    <source>
        <strain>CC9902</strain>
    </source>
</reference>
<name>COXX_SYNS9</name>
<sequence>MAEVTATVALTRADVVPSRKRVKLPAWLEVAKPRLIPLLLATTLGGMALTEGWPLSSPRLICTLGGGALASAAAGVLNCLWEQDLDGRMNRTSGRALPSGRLSPTTAFIGAIACTLVAAMLLVSGVNCLAAGLSLLGLCSYVLLYTALLKPRTTQNIVVGGVAGAIPPLVGAAAATGHIGLGGWWLFALVMVWTPAHFWALALLLREDYRAVGIPMLPVVKGPVVTARAISRYGWATVLLSGFGILALPTGGLFYGLMLLPYNNRLLQLVHRLAADPDSLTNAKSLFRWSILYLFGICLLLILSRSALAAHLDQQMIAMLMQLSVA</sequence>
<comment type="function">
    <text evidence="1">Converts heme B (protoheme IX) to heme O by substitution of the vinyl group on carbon 2 of heme B porphyrin ring with a hydroxyethyl farnesyl side group.</text>
</comment>
<comment type="catalytic activity">
    <reaction evidence="1">
        <text>heme b + (2E,6E)-farnesyl diphosphate + H2O = Fe(II)-heme o + diphosphate</text>
        <dbReference type="Rhea" id="RHEA:28070"/>
        <dbReference type="ChEBI" id="CHEBI:15377"/>
        <dbReference type="ChEBI" id="CHEBI:33019"/>
        <dbReference type="ChEBI" id="CHEBI:60344"/>
        <dbReference type="ChEBI" id="CHEBI:60530"/>
        <dbReference type="ChEBI" id="CHEBI:175763"/>
        <dbReference type="EC" id="2.5.1.141"/>
    </reaction>
</comment>
<comment type="pathway">
    <text evidence="1">Porphyrin-containing compound metabolism; heme O biosynthesis; heme O from protoheme: step 1/1.</text>
</comment>
<comment type="subcellular location">
    <subcellularLocation>
        <location evidence="1">Cell inner membrane</location>
        <topology evidence="1">Multi-pass membrane protein</topology>
    </subcellularLocation>
</comment>
<comment type="miscellaneous">
    <text evidence="1">Carbon 2 of the heme B porphyrin ring is defined according to the Fischer nomenclature.</text>
</comment>
<comment type="similarity">
    <text evidence="1">Belongs to the UbiA prenyltransferase family. Protoheme IX farnesyltransferase subfamily.</text>
</comment>
<gene>
    <name evidence="1" type="primary">ctaB</name>
    <name type="ordered locus">Syncc9902_1752</name>
</gene>
<proteinExistence type="inferred from homology"/>
<protein>
    <recommendedName>
        <fullName evidence="1">Protoheme IX farnesyltransferase</fullName>
        <ecNumber evidence="1">2.5.1.141</ecNumber>
    </recommendedName>
    <alternativeName>
        <fullName evidence="1">Heme B farnesyltransferase</fullName>
    </alternativeName>
    <alternativeName>
        <fullName evidence="1">Heme O synthase</fullName>
    </alternativeName>
</protein>
<feature type="chain" id="PRO_0000327175" description="Protoheme IX farnesyltransferase">
    <location>
        <begin position="1"/>
        <end position="326"/>
    </location>
</feature>
<feature type="transmembrane region" description="Helical" evidence="1">
    <location>
        <begin position="35"/>
        <end position="55"/>
    </location>
</feature>
<feature type="transmembrane region" description="Helical" evidence="1">
    <location>
        <begin position="60"/>
        <end position="80"/>
    </location>
</feature>
<feature type="transmembrane region" description="Helical" evidence="1">
    <location>
        <begin position="106"/>
        <end position="126"/>
    </location>
</feature>
<feature type="transmembrane region" description="Helical" evidence="1">
    <location>
        <begin position="129"/>
        <end position="149"/>
    </location>
</feature>
<feature type="transmembrane region" description="Helical" evidence="1">
    <location>
        <begin position="157"/>
        <end position="177"/>
    </location>
</feature>
<feature type="transmembrane region" description="Helical" evidence="1">
    <location>
        <begin position="185"/>
        <end position="205"/>
    </location>
</feature>
<feature type="transmembrane region" description="Helical" evidence="1">
    <location>
        <begin position="238"/>
        <end position="258"/>
    </location>
</feature>
<feature type="transmembrane region" description="Helical" evidence="1">
    <location>
        <begin position="289"/>
        <end position="309"/>
    </location>
</feature>
<evidence type="ECO:0000255" key="1">
    <source>
        <dbReference type="HAMAP-Rule" id="MF_00154"/>
    </source>
</evidence>
<organism>
    <name type="scientific">Synechococcus sp. (strain CC9902)</name>
    <dbReference type="NCBI Taxonomy" id="316279"/>
    <lineage>
        <taxon>Bacteria</taxon>
        <taxon>Bacillati</taxon>
        <taxon>Cyanobacteriota</taxon>
        <taxon>Cyanophyceae</taxon>
        <taxon>Synechococcales</taxon>
        <taxon>Synechococcaceae</taxon>
        <taxon>Synechococcus</taxon>
    </lineage>
</organism>
<accession>Q3AV04</accession>